<protein>
    <recommendedName>
        <fullName>Transcriptional coactivator YAP1-A</fullName>
        <shortName>Yes-associated protein 1-A</shortName>
        <shortName evidence="8">xYAP</shortName>
    </recommendedName>
    <alternativeName>
        <fullName>Protein yorkie homolog-A</fullName>
    </alternativeName>
    <alternativeName>
        <fullName>Yes-associated protein YAP65 homolog A</fullName>
    </alternativeName>
</protein>
<gene>
    <name evidence="9" type="primary">yap1-a</name>
    <name evidence="8" type="synonym">yap</name>
</gene>
<evidence type="ECO:0000250" key="1">
    <source>
        <dbReference type="UniProtKB" id="A0A8C0NGY6"/>
    </source>
</evidence>
<evidence type="ECO:0000250" key="2">
    <source>
        <dbReference type="UniProtKB" id="H2LBU8"/>
    </source>
</evidence>
<evidence type="ECO:0000250" key="3">
    <source>
        <dbReference type="UniProtKB" id="P46937"/>
    </source>
</evidence>
<evidence type="ECO:0000255" key="4"/>
<evidence type="ECO:0000255" key="5">
    <source>
        <dbReference type="PROSITE-ProRule" id="PRU00224"/>
    </source>
</evidence>
<evidence type="ECO:0000256" key="6">
    <source>
        <dbReference type="SAM" id="MobiDB-lite"/>
    </source>
</evidence>
<evidence type="ECO:0000269" key="7">
    <source>
    </source>
</evidence>
<evidence type="ECO:0000303" key="8">
    <source>
    </source>
</evidence>
<evidence type="ECO:0000305" key="9"/>
<keyword id="KW-0010">Activator</keyword>
<keyword id="KW-0965">Cell junction</keyword>
<keyword id="KW-1003">Cell membrane</keyword>
<keyword id="KW-0175">Coiled coil</keyword>
<keyword id="KW-0963">Cytoplasm</keyword>
<keyword id="KW-0472">Membrane</keyword>
<keyword id="KW-0539">Nucleus</keyword>
<keyword id="KW-0597">Phosphoprotein</keyword>
<keyword id="KW-1185">Reference proteome</keyword>
<keyword id="KW-0677">Repeat</keyword>
<keyword id="KW-0678">Repressor</keyword>
<keyword id="KW-0796">Tight junction</keyword>
<keyword id="KW-0804">Transcription</keyword>
<keyword id="KW-0805">Transcription regulation</keyword>
<name>YAP1A_XENLA</name>
<proteinExistence type="evidence at protein level"/>
<dbReference type="EMBL" id="FJ979828">
    <property type="protein sequence ID" value="ADC43261.1"/>
    <property type="molecule type" value="mRNA"/>
</dbReference>
<dbReference type="RefSeq" id="NP_001233236.1">
    <property type="nucleotide sequence ID" value="NM_001246307.1"/>
</dbReference>
<dbReference type="SMR" id="D6C652"/>
<dbReference type="IntAct" id="D6C652">
    <property type="interactions" value="1"/>
</dbReference>
<dbReference type="AGR" id="Xenbase:XB-GENE-17333137"/>
<dbReference type="Xenbase" id="XB-GENE-17333137">
    <property type="gene designation" value="yap1.L"/>
</dbReference>
<dbReference type="Proteomes" id="UP000186698">
    <property type="component" value="Unplaced"/>
</dbReference>
<dbReference type="Bgee" id="100653494">
    <property type="expression patterns" value="Expressed in egg cell and 19 other cell types or tissues"/>
</dbReference>
<dbReference type="GO" id="GO:0005923">
    <property type="term" value="C:bicellular tight junction"/>
    <property type="evidence" value="ECO:0007669"/>
    <property type="project" value="UniProtKB-SubCell"/>
</dbReference>
<dbReference type="GO" id="GO:0005911">
    <property type="term" value="C:cell-cell junction"/>
    <property type="evidence" value="ECO:0000250"/>
    <property type="project" value="UniProtKB"/>
</dbReference>
<dbReference type="GO" id="GO:0005737">
    <property type="term" value="C:cytoplasm"/>
    <property type="evidence" value="ECO:0000250"/>
    <property type="project" value="UniProtKB"/>
</dbReference>
<dbReference type="GO" id="GO:0005634">
    <property type="term" value="C:nucleus"/>
    <property type="evidence" value="ECO:0000250"/>
    <property type="project" value="UniProtKB"/>
</dbReference>
<dbReference type="GO" id="GO:0005886">
    <property type="term" value="C:plasma membrane"/>
    <property type="evidence" value="ECO:0007669"/>
    <property type="project" value="UniProtKB-SubCell"/>
</dbReference>
<dbReference type="GO" id="GO:0003713">
    <property type="term" value="F:transcription coactivator activity"/>
    <property type="evidence" value="ECO:0000318"/>
    <property type="project" value="GO_Central"/>
</dbReference>
<dbReference type="GO" id="GO:0003714">
    <property type="term" value="F:transcription corepressor activity"/>
    <property type="evidence" value="ECO:0000318"/>
    <property type="project" value="GO_Central"/>
</dbReference>
<dbReference type="GO" id="GO:0035329">
    <property type="term" value="P:hippo signaling"/>
    <property type="evidence" value="ECO:0000318"/>
    <property type="project" value="GO_Central"/>
</dbReference>
<dbReference type="GO" id="GO:0045944">
    <property type="term" value="P:positive regulation of transcription by RNA polymerase II"/>
    <property type="evidence" value="ECO:0000318"/>
    <property type="project" value="GO_Central"/>
</dbReference>
<dbReference type="CDD" id="cd00201">
    <property type="entry name" value="WW"/>
    <property type="match status" value="2"/>
</dbReference>
<dbReference type="FunFam" id="2.20.70.10:FF:000019">
    <property type="entry name" value="Putative transcriptional coactivator YAP1"/>
    <property type="match status" value="1"/>
</dbReference>
<dbReference type="FunFam" id="2.20.70.10:FF:000012">
    <property type="entry name" value="transcriptional coactivator YAP1 isoform X2"/>
    <property type="match status" value="1"/>
</dbReference>
<dbReference type="Gene3D" id="2.20.70.10">
    <property type="match status" value="2"/>
</dbReference>
<dbReference type="Gene3D" id="6.20.430.10">
    <property type="match status" value="1"/>
</dbReference>
<dbReference type="InterPro" id="IPR053819">
    <property type="entry name" value="TEADIR3_omega_loop"/>
</dbReference>
<dbReference type="InterPro" id="IPR001202">
    <property type="entry name" value="WW_dom"/>
</dbReference>
<dbReference type="InterPro" id="IPR036020">
    <property type="entry name" value="WW_dom_sf"/>
</dbReference>
<dbReference type="InterPro" id="IPR051583">
    <property type="entry name" value="YAP1"/>
</dbReference>
<dbReference type="PANTHER" id="PTHR17616:SF9">
    <property type="entry name" value="TRANSCRIPTIONAL COACTIVATOR YAP1"/>
    <property type="match status" value="1"/>
</dbReference>
<dbReference type="PANTHER" id="PTHR17616">
    <property type="entry name" value="YES-ASSOCIATED PROTEIN YAP1 FAMILY MEMBER"/>
    <property type="match status" value="1"/>
</dbReference>
<dbReference type="Pfam" id="PF15238">
    <property type="entry name" value="TEADIR3"/>
    <property type="match status" value="1"/>
</dbReference>
<dbReference type="Pfam" id="PF00397">
    <property type="entry name" value="WW"/>
    <property type="match status" value="2"/>
</dbReference>
<dbReference type="SMART" id="SM00456">
    <property type="entry name" value="WW"/>
    <property type="match status" value="2"/>
</dbReference>
<dbReference type="SUPFAM" id="SSF51045">
    <property type="entry name" value="WW domain"/>
    <property type="match status" value="2"/>
</dbReference>
<dbReference type="PROSITE" id="PS01159">
    <property type="entry name" value="WW_DOMAIN_1"/>
    <property type="match status" value="2"/>
</dbReference>
<dbReference type="PROSITE" id="PS50020">
    <property type="entry name" value="WW_DOMAIN_2"/>
    <property type="match status" value="2"/>
</dbReference>
<accession>D6C652</accession>
<reference key="1">
    <citation type="journal article" date="2011" name="PLoS ONE">
        <title>Yes-associated protein 65 (YAP) expands neural progenitors and regulates Pax3 expression in the neural plate border zone.</title>
        <authorList>
            <person name="Gee S.T."/>
            <person name="Milgram S.L."/>
            <person name="Kramer K.L."/>
            <person name="Conlon F.L."/>
            <person name="Moody S.A."/>
        </authorList>
    </citation>
    <scope>NUCLEOTIDE SEQUENCE [MRNA]</scope>
    <scope>FUNCTION</scope>
    <scope>DISRUPTION PHENOTYPE</scope>
    <scope>INTERACTION WITH TEAD1</scope>
</reference>
<comment type="function">
    <text evidence="2 3 7">Transcriptional regulator which can act both as a coactivator and a corepressor and is the critical downstream regulatory target in the Hippo signaling pathway that plays a pivotal role in organ size control and tumor suppression by restricting proliferation and promoting apoptosis (By similarity). Plays a key role in tissue tension and 3D tissue shape by regulating cortical actomyosin network formation (By similarity). Required for expansion of the neural plate and neural plate border zone progenitor pools. Acts as a direct regulator of pax3 expression via interaction with tead1 (PubMed:21687713).</text>
</comment>
<comment type="subunit">
    <text evidence="7">Interacts with tead1.</text>
</comment>
<comment type="subcellular location">
    <subcellularLocation>
        <location evidence="3">Cytoplasm</location>
    </subcellularLocation>
    <subcellularLocation>
        <location evidence="3">Nucleus</location>
    </subcellularLocation>
    <subcellularLocation>
        <location evidence="1">Cell junction</location>
        <location evidence="1">Tight junction</location>
    </subcellularLocation>
    <subcellularLocation>
        <location evidence="3">Cell membrane</location>
    </subcellularLocation>
    <text evidence="3">Both phosphorylation and cell density can regulate its subcellular localization. Phosphorylation sequesters it in the cytoplasm by inhibiting its translocation into the nucleus. At low density, predominantly nuclear and is translocated to the cytoplasm at high density.</text>
</comment>
<comment type="PTM">
    <text evidence="3">Phosphorylated by lats1 and lats2; leading to cytoplasmic translocation and inactivation.</text>
</comment>
<comment type="disruption phenotype">
    <text evidence="7">Incomplete epiboly at gastrulation, characterized by blastopore closure defects and impaired axis formation.</text>
</comment>
<comment type="similarity">
    <text evidence="9">Belongs to the YAP1 family.</text>
</comment>
<sequence length="459" mass="50275">MEPGSQQQPSAPAQQPPPVGHQVVHVRTDSETDLEALFNAVMNPKNANLPQTLPMRMRKLPDSFFKQPQPEAKSHSRQASTDGGSAGALTPQHVRAHSSPASLQLAAVSPGALSPQGVVTGLAPPSAPHLRQSSYEIPDDVPLPPGWEMAKTPSGQRYFLNHIDQTTTWQDPRKAMLSQINVTAPTSPPVQQNIMTPTGPLPDGWEQALTPEGEAYFINHKNKSTSWLDPRLDPRFAMNQQRLSQNAPVKAPPALPPPSPQTGVLGSGGNQQMRLQQLQMEKERLRLKHQELLRQVRPQELALRSQIPPMEQDGGTQNPVCTTGISQELRTMTMNSSDPFLNSGTYHSRDESTESGLSMSSYSVPRTPDDFLNSVDEMDTGEAITQSTIPTQQNRFPDYLETLPGTNVDLGTLEGEAMNVEGEELMPSLQEALSSDILNDMETVLAATKLDKESFLTWL</sequence>
<organism>
    <name type="scientific">Xenopus laevis</name>
    <name type="common">African clawed frog</name>
    <dbReference type="NCBI Taxonomy" id="8355"/>
    <lineage>
        <taxon>Eukaryota</taxon>
        <taxon>Metazoa</taxon>
        <taxon>Chordata</taxon>
        <taxon>Craniata</taxon>
        <taxon>Vertebrata</taxon>
        <taxon>Euteleostomi</taxon>
        <taxon>Amphibia</taxon>
        <taxon>Batrachia</taxon>
        <taxon>Anura</taxon>
        <taxon>Pipoidea</taxon>
        <taxon>Pipidae</taxon>
        <taxon>Xenopodinae</taxon>
        <taxon>Xenopus</taxon>
        <taxon>Xenopus</taxon>
    </lineage>
</organism>
<feature type="chain" id="PRO_0000433907" description="Transcriptional coactivator YAP1-A">
    <location>
        <begin position="1"/>
        <end position="459"/>
    </location>
</feature>
<feature type="domain" description="WW 1" evidence="5">
    <location>
        <begin position="141"/>
        <end position="174"/>
    </location>
</feature>
<feature type="domain" description="WW 2" evidence="5">
    <location>
        <begin position="199"/>
        <end position="232"/>
    </location>
</feature>
<feature type="region of interest" description="Disordered" evidence="6">
    <location>
        <begin position="1"/>
        <end position="22"/>
    </location>
</feature>
<feature type="region of interest" description="Disordered" evidence="6">
    <location>
        <begin position="65"/>
        <end position="99"/>
    </location>
</feature>
<feature type="region of interest" description="Disordered" evidence="6">
    <location>
        <begin position="126"/>
        <end position="145"/>
    </location>
</feature>
<feature type="region of interest" description="Disordered" evidence="6">
    <location>
        <begin position="246"/>
        <end position="268"/>
    </location>
</feature>
<feature type="region of interest" description="Transactivation domain" evidence="3">
    <location>
        <begin position="261"/>
        <end position="459"/>
    </location>
</feature>
<feature type="region of interest" description="Disordered" evidence="6">
    <location>
        <begin position="344"/>
        <end position="363"/>
    </location>
</feature>
<feature type="coiled-coil region" evidence="4">
    <location>
        <begin position="269"/>
        <end position="297"/>
    </location>
</feature>
<feature type="compositionally biased region" description="Low complexity" evidence="6">
    <location>
        <begin position="1"/>
        <end position="13"/>
    </location>
</feature>
<feature type="compositionally biased region" description="Pro residues" evidence="6">
    <location>
        <begin position="250"/>
        <end position="260"/>
    </location>
</feature>
<feature type="compositionally biased region" description="Polar residues" evidence="6">
    <location>
        <begin position="354"/>
        <end position="363"/>
    </location>
</feature>
<feature type="modified residue" description="Phosphoserine; by LATS1 and LATS2" evidence="3">
    <location>
        <position position="30"/>
    </location>
</feature>
<feature type="modified residue" description="Phosphoserine; by LATS1 and LATS2" evidence="3">
    <location>
        <position position="80"/>
    </location>
</feature>
<feature type="modified residue" description="Phosphoserine; by LATS1 and LATS2" evidence="3">
    <location>
        <position position="98"/>
    </location>
</feature>
<feature type="modified residue" description="Phosphoserine; by LATS1 and LATS2" evidence="3">
    <location>
        <position position="134"/>
    </location>
</feature>